<accession>Q0BCQ2</accession>
<keyword id="KW-0031">Aminopeptidase</keyword>
<keyword id="KW-0963">Cytoplasm</keyword>
<keyword id="KW-0378">Hydrolase</keyword>
<keyword id="KW-0464">Manganese</keyword>
<keyword id="KW-0479">Metal-binding</keyword>
<keyword id="KW-0645">Protease</keyword>
<evidence type="ECO:0000255" key="1">
    <source>
        <dbReference type="HAMAP-Rule" id="MF_00181"/>
    </source>
</evidence>
<feature type="chain" id="PRO_1000019891" description="Probable cytosol aminopeptidase">
    <location>
        <begin position="1"/>
        <end position="503"/>
    </location>
</feature>
<feature type="active site" evidence="1">
    <location>
        <position position="286"/>
    </location>
</feature>
<feature type="active site" evidence="1">
    <location>
        <position position="360"/>
    </location>
</feature>
<feature type="binding site" evidence="1">
    <location>
        <position position="274"/>
    </location>
    <ligand>
        <name>Mn(2+)</name>
        <dbReference type="ChEBI" id="CHEBI:29035"/>
        <label>2</label>
    </ligand>
</feature>
<feature type="binding site" evidence="1">
    <location>
        <position position="279"/>
    </location>
    <ligand>
        <name>Mn(2+)</name>
        <dbReference type="ChEBI" id="CHEBI:29035"/>
        <label>1</label>
    </ligand>
</feature>
<feature type="binding site" evidence="1">
    <location>
        <position position="279"/>
    </location>
    <ligand>
        <name>Mn(2+)</name>
        <dbReference type="ChEBI" id="CHEBI:29035"/>
        <label>2</label>
    </ligand>
</feature>
<feature type="binding site" evidence="1">
    <location>
        <position position="297"/>
    </location>
    <ligand>
        <name>Mn(2+)</name>
        <dbReference type="ChEBI" id="CHEBI:29035"/>
        <label>2</label>
    </ligand>
</feature>
<feature type="binding site" evidence="1">
    <location>
        <position position="356"/>
    </location>
    <ligand>
        <name>Mn(2+)</name>
        <dbReference type="ChEBI" id="CHEBI:29035"/>
        <label>1</label>
    </ligand>
</feature>
<feature type="binding site" evidence="1">
    <location>
        <position position="358"/>
    </location>
    <ligand>
        <name>Mn(2+)</name>
        <dbReference type="ChEBI" id="CHEBI:29035"/>
        <label>1</label>
    </ligand>
</feature>
<feature type="binding site" evidence="1">
    <location>
        <position position="358"/>
    </location>
    <ligand>
        <name>Mn(2+)</name>
        <dbReference type="ChEBI" id="CHEBI:29035"/>
        <label>2</label>
    </ligand>
</feature>
<organism>
    <name type="scientific">Burkholderia ambifaria (strain ATCC BAA-244 / DSM 16087 / CCUG 44356 / LMG 19182 / AMMD)</name>
    <name type="common">Burkholderia cepacia (strain AMMD)</name>
    <dbReference type="NCBI Taxonomy" id="339670"/>
    <lineage>
        <taxon>Bacteria</taxon>
        <taxon>Pseudomonadati</taxon>
        <taxon>Pseudomonadota</taxon>
        <taxon>Betaproteobacteria</taxon>
        <taxon>Burkholderiales</taxon>
        <taxon>Burkholderiaceae</taxon>
        <taxon>Burkholderia</taxon>
        <taxon>Burkholderia cepacia complex</taxon>
    </lineage>
</organism>
<dbReference type="EC" id="3.4.11.1" evidence="1"/>
<dbReference type="EC" id="3.4.11.10" evidence="1"/>
<dbReference type="EMBL" id="CP000440">
    <property type="protein sequence ID" value="ABI88071.1"/>
    <property type="molecule type" value="Genomic_DNA"/>
</dbReference>
<dbReference type="RefSeq" id="WP_011657679.1">
    <property type="nucleotide sequence ID" value="NC_008390.1"/>
</dbReference>
<dbReference type="SMR" id="Q0BCQ2"/>
<dbReference type="MEROPS" id="M17.003"/>
<dbReference type="GeneID" id="93085280"/>
<dbReference type="KEGG" id="bam:Bamb_2515"/>
<dbReference type="PATRIC" id="fig|339670.21.peg.2395"/>
<dbReference type="eggNOG" id="COG0260">
    <property type="taxonomic scope" value="Bacteria"/>
</dbReference>
<dbReference type="Proteomes" id="UP000000662">
    <property type="component" value="Chromosome 1"/>
</dbReference>
<dbReference type="GO" id="GO:0005737">
    <property type="term" value="C:cytoplasm"/>
    <property type="evidence" value="ECO:0007669"/>
    <property type="project" value="UniProtKB-SubCell"/>
</dbReference>
<dbReference type="GO" id="GO:0030145">
    <property type="term" value="F:manganese ion binding"/>
    <property type="evidence" value="ECO:0007669"/>
    <property type="project" value="UniProtKB-UniRule"/>
</dbReference>
<dbReference type="GO" id="GO:0070006">
    <property type="term" value="F:metalloaminopeptidase activity"/>
    <property type="evidence" value="ECO:0007669"/>
    <property type="project" value="InterPro"/>
</dbReference>
<dbReference type="GO" id="GO:0006508">
    <property type="term" value="P:proteolysis"/>
    <property type="evidence" value="ECO:0007669"/>
    <property type="project" value="UniProtKB-KW"/>
</dbReference>
<dbReference type="CDD" id="cd00433">
    <property type="entry name" value="Peptidase_M17"/>
    <property type="match status" value="1"/>
</dbReference>
<dbReference type="FunFam" id="3.40.630.10:FF:000004">
    <property type="entry name" value="Probable cytosol aminopeptidase"/>
    <property type="match status" value="1"/>
</dbReference>
<dbReference type="Gene3D" id="3.40.220.10">
    <property type="entry name" value="Leucine Aminopeptidase, subunit E, domain 1"/>
    <property type="match status" value="1"/>
</dbReference>
<dbReference type="Gene3D" id="3.40.630.10">
    <property type="entry name" value="Zn peptidases"/>
    <property type="match status" value="1"/>
</dbReference>
<dbReference type="HAMAP" id="MF_00181">
    <property type="entry name" value="Cytosol_peptidase_M17"/>
    <property type="match status" value="1"/>
</dbReference>
<dbReference type="InterPro" id="IPR011356">
    <property type="entry name" value="Leucine_aapep/pepB"/>
</dbReference>
<dbReference type="InterPro" id="IPR043472">
    <property type="entry name" value="Macro_dom-like"/>
</dbReference>
<dbReference type="InterPro" id="IPR000819">
    <property type="entry name" value="Peptidase_M17_C"/>
</dbReference>
<dbReference type="InterPro" id="IPR023042">
    <property type="entry name" value="Peptidase_M17_leu_NH2_pept"/>
</dbReference>
<dbReference type="InterPro" id="IPR008283">
    <property type="entry name" value="Peptidase_M17_N"/>
</dbReference>
<dbReference type="NCBIfam" id="NF002073">
    <property type="entry name" value="PRK00913.1-2"/>
    <property type="match status" value="1"/>
</dbReference>
<dbReference type="NCBIfam" id="NF002074">
    <property type="entry name" value="PRK00913.1-4"/>
    <property type="match status" value="1"/>
</dbReference>
<dbReference type="NCBIfam" id="NF002077">
    <property type="entry name" value="PRK00913.2-4"/>
    <property type="match status" value="1"/>
</dbReference>
<dbReference type="PANTHER" id="PTHR11963:SF23">
    <property type="entry name" value="CYTOSOL AMINOPEPTIDASE"/>
    <property type="match status" value="1"/>
</dbReference>
<dbReference type="PANTHER" id="PTHR11963">
    <property type="entry name" value="LEUCINE AMINOPEPTIDASE-RELATED"/>
    <property type="match status" value="1"/>
</dbReference>
<dbReference type="Pfam" id="PF00883">
    <property type="entry name" value="Peptidase_M17"/>
    <property type="match status" value="1"/>
</dbReference>
<dbReference type="Pfam" id="PF02789">
    <property type="entry name" value="Peptidase_M17_N"/>
    <property type="match status" value="1"/>
</dbReference>
<dbReference type="PRINTS" id="PR00481">
    <property type="entry name" value="LAMNOPPTDASE"/>
</dbReference>
<dbReference type="SUPFAM" id="SSF52949">
    <property type="entry name" value="Macro domain-like"/>
    <property type="match status" value="1"/>
</dbReference>
<dbReference type="SUPFAM" id="SSF53187">
    <property type="entry name" value="Zn-dependent exopeptidases"/>
    <property type="match status" value="1"/>
</dbReference>
<dbReference type="PROSITE" id="PS00631">
    <property type="entry name" value="CYTOSOL_AP"/>
    <property type="match status" value="1"/>
</dbReference>
<protein>
    <recommendedName>
        <fullName evidence="1">Probable cytosol aminopeptidase</fullName>
        <ecNumber evidence="1">3.4.11.1</ecNumber>
    </recommendedName>
    <alternativeName>
        <fullName evidence="1">Leucine aminopeptidase</fullName>
        <shortName evidence="1">LAP</shortName>
        <ecNumber evidence="1">3.4.11.10</ecNumber>
    </alternativeName>
    <alternativeName>
        <fullName evidence="1">Leucyl aminopeptidase</fullName>
    </alternativeName>
</protein>
<reference key="1">
    <citation type="submission" date="2006-08" db="EMBL/GenBank/DDBJ databases">
        <title>Complete sequence of chromosome 1 of Burkholderia cepacia AMMD.</title>
        <authorList>
            <person name="Copeland A."/>
            <person name="Lucas S."/>
            <person name="Lapidus A."/>
            <person name="Barry K."/>
            <person name="Detter J.C."/>
            <person name="Glavina del Rio T."/>
            <person name="Hammon N."/>
            <person name="Israni S."/>
            <person name="Pitluck S."/>
            <person name="Bruce D."/>
            <person name="Chain P."/>
            <person name="Malfatti S."/>
            <person name="Shin M."/>
            <person name="Vergez L."/>
            <person name="Schmutz J."/>
            <person name="Larimer F."/>
            <person name="Land M."/>
            <person name="Hauser L."/>
            <person name="Kyrpides N."/>
            <person name="Kim E."/>
            <person name="Parke J."/>
            <person name="Coenye T."/>
            <person name="Konstantinidis K."/>
            <person name="Ramette A."/>
            <person name="Tiedje J."/>
            <person name="Richardson P."/>
        </authorList>
    </citation>
    <scope>NUCLEOTIDE SEQUENCE [LARGE SCALE GENOMIC DNA]</scope>
    <source>
        <strain>ATCC BAA-244 / DSM 16087 / CCUG 44356 / LMG 19182 / AMMD</strain>
    </source>
</reference>
<name>AMPA_BURCM</name>
<sequence length="503" mass="53123">MDFSIKGCDWSKGEAKGFLTGKSDCIVLGIFEAQTLSGAALDIDTATKGLISRVVKAGDMDGKRGKTLFLHEVSGIGASRVLLVGLGKQDAFNQKAYTDAVTAAWRALLSTKIVQVTFTLAQLPVDERSSDWGVRAAILALRNETYRFTQMKSKPEPASHTLKRVVFSVDPVDEKAAKLAVKQAVALANGMDLTRDLGNLPGNVCTPTYLGNTAKKIAKDWGLKAEVLGLKQIQALNMGSFLSVARASVEPPQFIVLHYQGAAAKAAPVVLVGKGITFDTGGISLKPGEAMDEMKYDMCGAGSVLGTMRAVAEMGLKINVVAIVPTCENMPGGNATKPGDIVTSMKGLTIEVLNTDAEGRLILCDALTYAERFKPAAVIDVATLTGACVIALGTHNSGLFSKDDALAGELLDASREANDPAWRMPLDDEYQDQLKSNFADIANIGGRPAGAVTAACFLSRFTDSYPWAHLDIAGTAWKGGAAKGATGRPVPLLAQFLIDRAGQ</sequence>
<gene>
    <name evidence="1" type="primary">pepA</name>
    <name type="ordered locus">Bamb_2515</name>
</gene>
<proteinExistence type="inferred from homology"/>
<comment type="function">
    <text evidence="1">Presumably involved in the processing and regular turnover of intracellular proteins. Catalyzes the removal of unsubstituted N-terminal amino acids from various peptides.</text>
</comment>
<comment type="catalytic activity">
    <reaction evidence="1">
        <text>Release of an N-terminal amino acid, Xaa-|-Yaa-, in which Xaa is preferably Leu, but may be other amino acids including Pro although not Arg or Lys, and Yaa may be Pro. Amino acid amides and methyl esters are also readily hydrolyzed, but rates on arylamides are exceedingly low.</text>
        <dbReference type="EC" id="3.4.11.1"/>
    </reaction>
</comment>
<comment type="catalytic activity">
    <reaction evidence="1">
        <text>Release of an N-terminal amino acid, preferentially leucine, but not glutamic or aspartic acids.</text>
        <dbReference type="EC" id="3.4.11.10"/>
    </reaction>
</comment>
<comment type="cofactor">
    <cofactor evidence="1">
        <name>Mn(2+)</name>
        <dbReference type="ChEBI" id="CHEBI:29035"/>
    </cofactor>
    <text evidence="1">Binds 2 manganese ions per subunit.</text>
</comment>
<comment type="subcellular location">
    <subcellularLocation>
        <location evidence="1">Cytoplasm</location>
    </subcellularLocation>
</comment>
<comment type="similarity">
    <text evidence="1">Belongs to the peptidase M17 family.</text>
</comment>